<feature type="chain" id="PRO_1000213576" description="UPF0200 protein M164_1169">
    <location>
        <begin position="1"/>
        <end position="188"/>
    </location>
</feature>
<feature type="binding site" evidence="1">
    <location>
        <begin position="15"/>
        <end position="22"/>
    </location>
    <ligand>
        <name>ATP</name>
        <dbReference type="ChEBI" id="CHEBI:30616"/>
    </ligand>
</feature>
<accession>C4KGQ9</accession>
<keyword id="KW-0067">ATP-binding</keyword>
<keyword id="KW-0547">Nucleotide-binding</keyword>
<proteinExistence type="inferred from homology"/>
<organism>
    <name type="scientific">Saccharolobus islandicus (strain M.16.4 / Kamchatka #3)</name>
    <name type="common">Sulfolobus islandicus</name>
    <dbReference type="NCBI Taxonomy" id="426118"/>
    <lineage>
        <taxon>Archaea</taxon>
        <taxon>Thermoproteota</taxon>
        <taxon>Thermoprotei</taxon>
        <taxon>Sulfolobales</taxon>
        <taxon>Sulfolobaceae</taxon>
        <taxon>Saccharolobus</taxon>
    </lineage>
</organism>
<protein>
    <recommendedName>
        <fullName evidence="1">UPF0200 protein M164_1169</fullName>
    </recommendedName>
</protein>
<evidence type="ECO:0000255" key="1">
    <source>
        <dbReference type="HAMAP-Rule" id="MF_01111"/>
    </source>
</evidence>
<reference key="1">
    <citation type="journal article" date="2009" name="Proc. Natl. Acad. Sci. U.S.A.">
        <title>Biogeography of the Sulfolobus islandicus pan-genome.</title>
        <authorList>
            <person name="Reno M.L."/>
            <person name="Held N.L."/>
            <person name="Fields C.J."/>
            <person name="Burke P.V."/>
            <person name="Whitaker R.J."/>
        </authorList>
    </citation>
    <scope>NUCLEOTIDE SEQUENCE [LARGE SCALE GENOMIC DNA]</scope>
    <source>
        <strain>M.16.4 / Kamchatka #3</strain>
    </source>
</reference>
<gene>
    <name type="ordered locus">M164_1169</name>
</gene>
<comment type="similarity">
    <text evidence="1">Belongs to the UPF0200 family.</text>
</comment>
<name>Y1169_SACI6</name>
<dbReference type="EMBL" id="CP001402">
    <property type="protein sequence ID" value="ACR41773.1"/>
    <property type="molecule type" value="Genomic_DNA"/>
</dbReference>
<dbReference type="RefSeq" id="WP_012735912.1">
    <property type="nucleotide sequence ID" value="NC_012726.1"/>
</dbReference>
<dbReference type="SMR" id="C4KGQ9"/>
<dbReference type="GeneID" id="84061505"/>
<dbReference type="KEGG" id="sid:M164_1169"/>
<dbReference type="HOGENOM" id="CLU_096329_1_0_2"/>
<dbReference type="Proteomes" id="UP000001479">
    <property type="component" value="Chromosome"/>
</dbReference>
<dbReference type="GO" id="GO:0005524">
    <property type="term" value="F:ATP binding"/>
    <property type="evidence" value="ECO:0007669"/>
    <property type="project" value="UniProtKB-UniRule"/>
</dbReference>
<dbReference type="CDD" id="cd02022">
    <property type="entry name" value="DPCK"/>
    <property type="match status" value="1"/>
</dbReference>
<dbReference type="Gene3D" id="3.40.50.300">
    <property type="entry name" value="P-loop containing nucleotide triphosphate hydrolases"/>
    <property type="match status" value="1"/>
</dbReference>
<dbReference type="HAMAP" id="MF_01111">
    <property type="entry name" value="UPF0200"/>
    <property type="match status" value="1"/>
</dbReference>
<dbReference type="InterPro" id="IPR022970">
    <property type="entry name" value="NTP_hydrolase-rel"/>
</dbReference>
<dbReference type="InterPro" id="IPR027417">
    <property type="entry name" value="P-loop_NTPase"/>
</dbReference>
<dbReference type="PANTHER" id="PTHR41930:SF1">
    <property type="entry name" value="DEPHOSPHO-COA KINASE"/>
    <property type="match status" value="1"/>
</dbReference>
<dbReference type="PANTHER" id="PTHR41930">
    <property type="entry name" value="UPF0200 PROTEIN MJ1399"/>
    <property type="match status" value="1"/>
</dbReference>
<dbReference type="Pfam" id="PF13238">
    <property type="entry name" value="AAA_18"/>
    <property type="match status" value="1"/>
</dbReference>
<dbReference type="SUPFAM" id="SSF52540">
    <property type="entry name" value="P-loop containing nucleoside triphosphate hydrolases"/>
    <property type="match status" value="1"/>
</dbReference>
<sequence length="188" mass="21467">MSYLVVTIKVILITGMPGSGKSEFAKLLKERGAKVIVMSDVVRKRYSIEAKPGERLMDFAKRLREIYGDGVVARLCVEELGTSNHDLVVFDGVRSLAEVEEFKRLLGDSVYIVAVHSPPKIRYKRIIERLRSDDSKEISELIRRDREELKLGIGEVIAMADYIITNDSNYEEFKRRCEEVTDRVLKNG</sequence>